<comment type="function">
    <text evidence="1">Catalyzes the hydrolysis of UDP-3-O-myristoyl-N-acetylglucosamine to form UDP-3-O-myristoylglucosamine and acetate, the committed step in lipid A biosynthesis.</text>
</comment>
<comment type="catalytic activity">
    <reaction evidence="1">
        <text>a UDP-3-O-[(3R)-3-hydroxyacyl]-N-acetyl-alpha-D-glucosamine + H2O = a UDP-3-O-[(3R)-3-hydroxyacyl]-alpha-D-glucosamine + acetate</text>
        <dbReference type="Rhea" id="RHEA:67816"/>
        <dbReference type="ChEBI" id="CHEBI:15377"/>
        <dbReference type="ChEBI" id="CHEBI:30089"/>
        <dbReference type="ChEBI" id="CHEBI:137740"/>
        <dbReference type="ChEBI" id="CHEBI:173225"/>
        <dbReference type="EC" id="3.5.1.108"/>
    </reaction>
</comment>
<comment type="cofactor">
    <cofactor evidence="1">
        <name>Zn(2+)</name>
        <dbReference type="ChEBI" id="CHEBI:29105"/>
    </cofactor>
</comment>
<comment type="pathway">
    <text evidence="1">Glycolipid biosynthesis; lipid IV(A) biosynthesis; lipid IV(A) from (3R)-3-hydroxytetradecanoyl-[acyl-carrier-protein] and UDP-N-acetyl-alpha-D-glucosamine: step 2/6.</text>
</comment>
<comment type="similarity">
    <text evidence="1">Belongs to the LpxC family.</text>
</comment>
<gene>
    <name evidence="1" type="primary">lpxC</name>
    <name type="ordered locus">ECSE_0098</name>
</gene>
<accession>B6HZ74</accession>
<dbReference type="EC" id="3.5.1.108" evidence="1"/>
<dbReference type="EMBL" id="AP009240">
    <property type="protein sequence ID" value="BAG75622.1"/>
    <property type="molecule type" value="Genomic_DNA"/>
</dbReference>
<dbReference type="RefSeq" id="WP_000595482.1">
    <property type="nucleotide sequence ID" value="NC_011415.1"/>
</dbReference>
<dbReference type="SMR" id="B6HZ74"/>
<dbReference type="GeneID" id="93777338"/>
<dbReference type="KEGG" id="ecy:ECSE_0098"/>
<dbReference type="HOGENOM" id="CLU_046528_1_0_6"/>
<dbReference type="UniPathway" id="UPA00359">
    <property type="reaction ID" value="UER00478"/>
</dbReference>
<dbReference type="Proteomes" id="UP000008199">
    <property type="component" value="Chromosome"/>
</dbReference>
<dbReference type="GO" id="GO:0016020">
    <property type="term" value="C:membrane"/>
    <property type="evidence" value="ECO:0007669"/>
    <property type="project" value="GOC"/>
</dbReference>
<dbReference type="GO" id="GO:0046872">
    <property type="term" value="F:metal ion binding"/>
    <property type="evidence" value="ECO:0007669"/>
    <property type="project" value="UniProtKB-KW"/>
</dbReference>
<dbReference type="GO" id="GO:0103117">
    <property type="term" value="F:UDP-3-O-acyl-N-acetylglucosamine deacetylase activity"/>
    <property type="evidence" value="ECO:0007669"/>
    <property type="project" value="UniProtKB-UniRule"/>
</dbReference>
<dbReference type="GO" id="GO:0009245">
    <property type="term" value="P:lipid A biosynthetic process"/>
    <property type="evidence" value="ECO:0007669"/>
    <property type="project" value="UniProtKB-UniRule"/>
</dbReference>
<dbReference type="FunFam" id="3.30.1700.10:FF:000001">
    <property type="entry name" value="UDP-3-O-acyl-N-acetylglucosamine deacetylase"/>
    <property type="match status" value="1"/>
</dbReference>
<dbReference type="FunFam" id="3.30.230.20:FF:000001">
    <property type="entry name" value="UDP-3-O-acyl-N-acetylglucosamine deacetylase"/>
    <property type="match status" value="1"/>
</dbReference>
<dbReference type="Gene3D" id="3.30.230.20">
    <property type="entry name" value="lpxc deacetylase, domain 1"/>
    <property type="match status" value="1"/>
</dbReference>
<dbReference type="Gene3D" id="3.30.1700.10">
    <property type="entry name" value="lpxc deacetylase, domain 2"/>
    <property type="match status" value="1"/>
</dbReference>
<dbReference type="HAMAP" id="MF_00388">
    <property type="entry name" value="LpxC"/>
    <property type="match status" value="1"/>
</dbReference>
<dbReference type="InterPro" id="IPR020568">
    <property type="entry name" value="Ribosomal_Su5_D2-typ_SF"/>
</dbReference>
<dbReference type="InterPro" id="IPR004463">
    <property type="entry name" value="UDP-acyl_GlcNac_deAcase"/>
</dbReference>
<dbReference type="InterPro" id="IPR011334">
    <property type="entry name" value="UDP-acyl_GlcNac_deAcase_C"/>
</dbReference>
<dbReference type="InterPro" id="IPR015870">
    <property type="entry name" value="UDP-acyl_N-AcGlcN_deAcase_N"/>
</dbReference>
<dbReference type="NCBIfam" id="TIGR00325">
    <property type="entry name" value="lpxC"/>
    <property type="match status" value="1"/>
</dbReference>
<dbReference type="PANTHER" id="PTHR33694">
    <property type="entry name" value="UDP-3-O-ACYL-N-ACETYLGLUCOSAMINE DEACETYLASE 1, MITOCHONDRIAL-RELATED"/>
    <property type="match status" value="1"/>
</dbReference>
<dbReference type="PANTHER" id="PTHR33694:SF1">
    <property type="entry name" value="UDP-3-O-ACYL-N-ACETYLGLUCOSAMINE DEACETYLASE 1, MITOCHONDRIAL-RELATED"/>
    <property type="match status" value="1"/>
</dbReference>
<dbReference type="Pfam" id="PF03331">
    <property type="entry name" value="LpxC"/>
    <property type="match status" value="1"/>
</dbReference>
<dbReference type="SUPFAM" id="SSF54211">
    <property type="entry name" value="Ribosomal protein S5 domain 2-like"/>
    <property type="match status" value="2"/>
</dbReference>
<proteinExistence type="inferred from homology"/>
<keyword id="KW-0378">Hydrolase</keyword>
<keyword id="KW-0441">Lipid A biosynthesis</keyword>
<keyword id="KW-0444">Lipid biosynthesis</keyword>
<keyword id="KW-0443">Lipid metabolism</keyword>
<keyword id="KW-0479">Metal-binding</keyword>
<keyword id="KW-0862">Zinc</keyword>
<name>LPXC_ECOSE</name>
<protein>
    <recommendedName>
        <fullName evidence="1">UDP-3-O-acyl-N-acetylglucosamine deacetylase</fullName>
        <shortName evidence="1">UDP-3-O-acyl-GlcNAc deacetylase</shortName>
        <ecNumber evidence="1">3.5.1.108</ecNumber>
    </recommendedName>
    <alternativeName>
        <fullName evidence="1">UDP-3-O-[R-3-hydroxymyristoyl]-N-acetylglucosamine deacetylase</fullName>
    </alternativeName>
</protein>
<feature type="chain" id="PRO_1000122785" description="UDP-3-O-acyl-N-acetylglucosamine deacetylase">
    <location>
        <begin position="1"/>
        <end position="305"/>
    </location>
</feature>
<feature type="active site" description="Proton donor" evidence="1">
    <location>
        <position position="265"/>
    </location>
</feature>
<feature type="binding site" evidence="1">
    <location>
        <position position="79"/>
    </location>
    <ligand>
        <name>Zn(2+)</name>
        <dbReference type="ChEBI" id="CHEBI:29105"/>
    </ligand>
</feature>
<feature type="binding site" evidence="1">
    <location>
        <position position="238"/>
    </location>
    <ligand>
        <name>Zn(2+)</name>
        <dbReference type="ChEBI" id="CHEBI:29105"/>
    </ligand>
</feature>
<feature type="binding site" evidence="1">
    <location>
        <position position="242"/>
    </location>
    <ligand>
        <name>Zn(2+)</name>
        <dbReference type="ChEBI" id="CHEBI:29105"/>
    </ligand>
</feature>
<reference key="1">
    <citation type="journal article" date="2008" name="DNA Res.">
        <title>Complete genome sequence and comparative analysis of the wild-type commensal Escherichia coli strain SE11 isolated from a healthy adult.</title>
        <authorList>
            <person name="Oshima K."/>
            <person name="Toh H."/>
            <person name="Ogura Y."/>
            <person name="Sasamoto H."/>
            <person name="Morita H."/>
            <person name="Park S.-H."/>
            <person name="Ooka T."/>
            <person name="Iyoda S."/>
            <person name="Taylor T.D."/>
            <person name="Hayashi T."/>
            <person name="Itoh K."/>
            <person name="Hattori M."/>
        </authorList>
    </citation>
    <scope>NUCLEOTIDE SEQUENCE [LARGE SCALE GENOMIC DNA]</scope>
    <source>
        <strain>SE11</strain>
    </source>
</reference>
<organism>
    <name type="scientific">Escherichia coli (strain SE11)</name>
    <dbReference type="NCBI Taxonomy" id="409438"/>
    <lineage>
        <taxon>Bacteria</taxon>
        <taxon>Pseudomonadati</taxon>
        <taxon>Pseudomonadota</taxon>
        <taxon>Gammaproteobacteria</taxon>
        <taxon>Enterobacterales</taxon>
        <taxon>Enterobacteriaceae</taxon>
        <taxon>Escherichia</taxon>
    </lineage>
</organism>
<evidence type="ECO:0000255" key="1">
    <source>
        <dbReference type="HAMAP-Rule" id="MF_00388"/>
    </source>
</evidence>
<sequence length="305" mass="33956">MIKQRTLKRIVQATGVGLHTGKKVTLTLRPAPANTGVIYRRTDLNPPVDFPADAKSVRDTMLCTCLVNEHDVRISTVEHLNAALAGLGIDNIVIEVNAPEIPIMDGSAAPFVYLLLDAGIDELNCAKKFVRIKETVRVEDGDKWAEFKPYNGFSLDFTIDFNHPAIDSSNQRYAMNFSADAFMRQISRARTFGFMRDIEYLQSRGLCLGGSFDCAIVVDDYRVLNEDGLRFEDEFVRHKMLDAIGDLFMCGHNIIGAFTAYKSGHALNNKLLQAVLAKQEAWEYVTFQDDAELPLAFKAPSAVLA</sequence>